<gene>
    <name type="primary">PRNP</name>
    <name type="synonym">PRP</name>
</gene>
<sequence>MVKSHIGSWILVLFVAMWSDVGLCKKRPKPGGGWNTGGSRYPGQGSPGGNRYPPQGGGGWGQPHGGGWGQPHGGGWGQPHGGGWGQPHGGGGWGQGGTHSQWNKPSKPKTNMKHVAGAAAAGAVVGGLGGYMLGSAMSRPLIHFGNDYEDRYYRENMYRYPNQVYYRPVDQYNNQNTFVHDCVNITVKQHTVTTTTKGENFTETDIKMMERVVEQMCITQYQRESEAYYQRGASVILFSSPPVILLISFLIFLIVG</sequence>
<accession>P67987</accession>
<accession>O62669</accession>
<accession>P79142</accession>
<feature type="signal peptide" evidence="1">
    <location>
        <begin position="1"/>
        <end position="24"/>
    </location>
</feature>
<feature type="chain" id="PRO_0000025653" description="Major prion protein">
    <location>
        <begin position="25"/>
        <end position="233"/>
    </location>
</feature>
<feature type="propeptide" id="PRO_0000025654" description="Removed in mature form" evidence="5">
    <location>
        <begin position="234"/>
        <end position="256"/>
    </location>
</feature>
<feature type="repeat" description="1">
    <location>
        <begin position="54"/>
        <end position="62"/>
    </location>
</feature>
<feature type="repeat" description="2">
    <location>
        <begin position="63"/>
        <end position="70"/>
    </location>
</feature>
<feature type="repeat" description="3">
    <location>
        <begin position="71"/>
        <end position="78"/>
    </location>
</feature>
<feature type="repeat" description="4">
    <location>
        <begin position="79"/>
        <end position="86"/>
    </location>
</feature>
<feature type="repeat" description="5">
    <location>
        <begin position="87"/>
        <end position="95"/>
    </location>
</feature>
<feature type="region of interest" description="Interaction with GRB2, ERI3 and SYN1" evidence="4">
    <location>
        <begin position="25"/>
        <end position="233"/>
    </location>
</feature>
<feature type="region of interest" description="Disordered" evidence="6">
    <location>
        <begin position="28"/>
        <end position="110"/>
    </location>
</feature>
<feature type="region of interest" description="5 X 8 AA tandem repeats of P-H-G-G-G-W-G-Q">
    <location>
        <begin position="54"/>
        <end position="95"/>
    </location>
</feature>
<feature type="compositionally biased region" description="Gly residues" evidence="6">
    <location>
        <begin position="55"/>
        <end position="97"/>
    </location>
</feature>
<feature type="binding site" evidence="2">
    <location>
        <position position="64"/>
    </location>
    <ligand>
        <name>Cu(2+)</name>
        <dbReference type="ChEBI" id="CHEBI:29036"/>
        <label>1</label>
    </ligand>
</feature>
<feature type="binding site" evidence="2">
    <location>
        <position position="65"/>
    </location>
    <ligand>
        <name>Cu(2+)</name>
        <dbReference type="ChEBI" id="CHEBI:29036"/>
        <label>1</label>
    </ligand>
</feature>
<feature type="binding site" evidence="2">
    <location>
        <position position="66"/>
    </location>
    <ligand>
        <name>Cu(2+)</name>
        <dbReference type="ChEBI" id="CHEBI:29036"/>
        <label>1</label>
    </ligand>
</feature>
<feature type="binding site" evidence="2">
    <location>
        <position position="72"/>
    </location>
    <ligand>
        <name>Cu(2+)</name>
        <dbReference type="ChEBI" id="CHEBI:29036"/>
        <label>2</label>
    </ligand>
</feature>
<feature type="binding site" evidence="2">
    <location>
        <position position="73"/>
    </location>
    <ligand>
        <name>Cu(2+)</name>
        <dbReference type="ChEBI" id="CHEBI:29036"/>
        <label>2</label>
    </ligand>
</feature>
<feature type="binding site" evidence="2">
    <location>
        <position position="74"/>
    </location>
    <ligand>
        <name>Cu(2+)</name>
        <dbReference type="ChEBI" id="CHEBI:29036"/>
        <label>2</label>
    </ligand>
</feature>
<feature type="binding site" evidence="2">
    <location>
        <position position="80"/>
    </location>
    <ligand>
        <name>Cu(2+)</name>
        <dbReference type="ChEBI" id="CHEBI:29036"/>
        <label>3</label>
    </ligand>
</feature>
<feature type="binding site" evidence="2">
    <location>
        <position position="81"/>
    </location>
    <ligand>
        <name>Cu(2+)</name>
        <dbReference type="ChEBI" id="CHEBI:29036"/>
        <label>3</label>
    </ligand>
</feature>
<feature type="binding site" evidence="2">
    <location>
        <position position="82"/>
    </location>
    <ligand>
        <name>Cu(2+)</name>
        <dbReference type="ChEBI" id="CHEBI:29036"/>
        <label>3</label>
    </ligand>
</feature>
<feature type="binding site" evidence="2">
    <location>
        <position position="88"/>
    </location>
    <ligand>
        <name>Cu(2+)</name>
        <dbReference type="ChEBI" id="CHEBI:29036"/>
        <label>4</label>
    </ligand>
</feature>
<feature type="binding site" evidence="2">
    <location>
        <position position="90"/>
    </location>
    <ligand>
        <name>Cu(2+)</name>
        <dbReference type="ChEBI" id="CHEBI:29036"/>
        <label>4</label>
    </ligand>
</feature>
<feature type="binding site" evidence="2">
    <location>
        <position position="91"/>
    </location>
    <ligand>
        <name>Cu(2+)</name>
        <dbReference type="ChEBI" id="CHEBI:29036"/>
        <label>4</label>
    </ligand>
</feature>
<feature type="lipid moiety-binding region" description="GPI-anchor amidated alanine" evidence="5">
    <location>
        <position position="233"/>
    </location>
</feature>
<feature type="glycosylation site" description="N-linked (GlcNAc...) asparagine" evidence="5">
    <location>
        <position position="184"/>
    </location>
</feature>
<feature type="glycosylation site" description="N-linked (GlcNAc...) asparagine" evidence="5">
    <location>
        <position position="200"/>
    </location>
</feature>
<feature type="disulfide bond" evidence="3">
    <location>
        <begin position="182"/>
        <end position="217"/>
    </location>
</feature>
<organism>
    <name type="scientific">Cervus elaphus</name>
    <name type="common">Red deer</name>
    <dbReference type="NCBI Taxonomy" id="9860"/>
    <lineage>
        <taxon>Eukaryota</taxon>
        <taxon>Metazoa</taxon>
        <taxon>Chordata</taxon>
        <taxon>Craniata</taxon>
        <taxon>Vertebrata</taxon>
        <taxon>Euteleostomi</taxon>
        <taxon>Mammalia</taxon>
        <taxon>Eutheria</taxon>
        <taxon>Laurasiatheria</taxon>
        <taxon>Artiodactyla</taxon>
        <taxon>Ruminantia</taxon>
        <taxon>Pecora</taxon>
        <taxon>Cervidae</taxon>
        <taxon>Cervinae</taxon>
        <taxon>Cervus</taxon>
    </lineage>
</organism>
<name>PRIO_CEREL</name>
<reference key="1">
    <citation type="journal article" date="1997" name="Gene">
        <title>Sequencing analysis of prion genes from red deer and camel.</title>
        <authorList>
            <person name="Kaluz S."/>
            <person name="Kaluzova M."/>
            <person name="Flint A.P.F."/>
        </authorList>
    </citation>
    <scope>NUCLEOTIDE SEQUENCE [GENOMIC DNA]</scope>
    <source>
        <tissue>Blood</tissue>
    </source>
</reference>
<dbReference type="EMBL" id="Y09761">
    <property type="protein sequence ID" value="CAA70902.1"/>
    <property type="molecule type" value="Genomic_DNA"/>
</dbReference>
<dbReference type="SMR" id="P67987"/>
<dbReference type="GlyCosmos" id="P67987">
    <property type="glycosylation" value="2 sites, No reported glycans"/>
</dbReference>
<dbReference type="GO" id="GO:0005794">
    <property type="term" value="C:Golgi apparatus"/>
    <property type="evidence" value="ECO:0007669"/>
    <property type="project" value="UniProtKB-SubCell"/>
</dbReference>
<dbReference type="GO" id="GO:0005886">
    <property type="term" value="C:plasma membrane"/>
    <property type="evidence" value="ECO:0007669"/>
    <property type="project" value="UniProtKB-SubCell"/>
</dbReference>
<dbReference type="GO" id="GO:0098552">
    <property type="term" value="C:side of membrane"/>
    <property type="evidence" value="ECO:0007669"/>
    <property type="project" value="UniProtKB-KW"/>
</dbReference>
<dbReference type="GO" id="GO:0005507">
    <property type="term" value="F:copper ion binding"/>
    <property type="evidence" value="ECO:0000250"/>
    <property type="project" value="UniProtKB"/>
</dbReference>
<dbReference type="GO" id="GO:0051260">
    <property type="term" value="P:protein homooligomerization"/>
    <property type="evidence" value="ECO:0007669"/>
    <property type="project" value="InterPro"/>
</dbReference>
<dbReference type="FunFam" id="1.10.790.10:FF:000001">
    <property type="entry name" value="Major prion protein"/>
    <property type="match status" value="1"/>
</dbReference>
<dbReference type="Gene3D" id="1.10.790.10">
    <property type="entry name" value="Prion/Doppel protein, beta-ribbon domain"/>
    <property type="match status" value="1"/>
</dbReference>
<dbReference type="InterPro" id="IPR000817">
    <property type="entry name" value="Prion"/>
</dbReference>
<dbReference type="InterPro" id="IPR036924">
    <property type="entry name" value="Prion/Doppel_b-ribbon_dom_sf"/>
</dbReference>
<dbReference type="InterPro" id="IPR022416">
    <property type="entry name" value="Prion/Doppel_prot_b-ribbon_dom"/>
</dbReference>
<dbReference type="InterPro" id="IPR020949">
    <property type="entry name" value="Prion_copper_b_octapeptide"/>
</dbReference>
<dbReference type="InterPro" id="IPR025860">
    <property type="entry name" value="Prion_N"/>
</dbReference>
<dbReference type="PANTHER" id="PTHR15506">
    <property type="entry name" value="DOPPEL PRION"/>
    <property type="match status" value="1"/>
</dbReference>
<dbReference type="PANTHER" id="PTHR15506:SF2">
    <property type="entry name" value="MAJOR PRION PROTEIN"/>
    <property type="match status" value="1"/>
</dbReference>
<dbReference type="Pfam" id="PF00377">
    <property type="entry name" value="Prion"/>
    <property type="match status" value="1"/>
</dbReference>
<dbReference type="Pfam" id="PF11587">
    <property type="entry name" value="Prion_bPrPp"/>
    <property type="match status" value="1"/>
</dbReference>
<dbReference type="Pfam" id="PF03991">
    <property type="entry name" value="Prion_octapep"/>
    <property type="match status" value="1"/>
</dbReference>
<dbReference type="PRINTS" id="PR00341">
    <property type="entry name" value="PRION"/>
</dbReference>
<dbReference type="SMART" id="SM00157">
    <property type="entry name" value="PRP"/>
    <property type="match status" value="1"/>
</dbReference>
<dbReference type="SUPFAM" id="SSF54098">
    <property type="entry name" value="Prion-like"/>
    <property type="match status" value="1"/>
</dbReference>
<dbReference type="PROSITE" id="PS00291">
    <property type="entry name" value="PRION_1"/>
    <property type="match status" value="1"/>
</dbReference>
<dbReference type="PROSITE" id="PS00706">
    <property type="entry name" value="PRION_2"/>
    <property type="match status" value="1"/>
</dbReference>
<comment type="function">
    <text evidence="2 4">Its primary physiological function is unclear. Has cytoprotective activity against internal or environmental stresses. May play a role in neuronal development and synaptic plasticity. May be required for neuronal myelin sheath maintenance. May play a role in iron uptake and iron homeostasis. Soluble oligomers are toxic to cultured neuroblastoma cells and induce apoptosis (in vitro). Association with GPC1 (via its heparan sulfate chains) targets PRNP to lipid rafts. Also provides Cu(2+) or Zn(2+) for the ascorbate-mediated GPC1 deaminase degradation of its heparan sulfate side chains (By similarity).</text>
</comment>
<comment type="subunit">
    <text evidence="2 4">Monomer and homodimer. Has a tendency to aggregate into amyloid fibrils containing a cross-beta spine, formed by a steric zipper of superposed beta-strands. Soluble oligomers may represent an intermediate stage on the path to fibril formation. Copper binding may promote oligomerization. Interacts with GRB2, APP, ERI3/PRNPIP and SYN1. Mislocalized cytosolically exposed PrP interacts with MGRN1; this interaction alters MGRN1 subcellular location and causes lysosomal enlargement. Interacts with KIAA1191.</text>
</comment>
<comment type="subcellular location">
    <subcellularLocation>
        <location evidence="2">Cell membrane</location>
        <topology evidence="2">Lipid-anchor</topology>
        <topology evidence="2">GPI-anchor</topology>
    </subcellularLocation>
    <subcellularLocation>
        <location evidence="4">Golgi apparatus</location>
    </subcellularLocation>
    <text evidence="2">Targeted to lipid rafts via association with the heparan sulfate chains of GPC1. Colocates, in the presence of Cu(2+), to vesicles in para- and perinuclear regions, where both proteins undergo internalization. Heparin displaces PRNP from lipid rafts and promotes endocytosis.</text>
</comment>
<comment type="domain">
    <text evidence="2">The normal, monomeric form has a mainly alpha-helical structure. The disease-associated, protease-resistant form forms amyloid fibrils containing a cross-beta spine, formed by a steric zipper of superposed beta-strands. Disease mutations may favor intermolecular contacts via short beta strands, and may thereby trigger oligomerization.</text>
</comment>
<comment type="domain">
    <text evidence="2">Contains an N-terminal region composed of octamer repeats. At low copper concentrations, the sidechains of His residues from three or four repeats contribute to the binding of a single copper ion. Alternatively, a copper ion can be bound by interaction with the sidechain and backbone amide nitrogen of a single His residue. The observed copper binding stoichiometry suggests that two repeat regions cooperate to stabilize the binding of a single copper ion. At higher copper concentrations, each octamer can bind one copper ion by interactions with the His sidechain and Gly backbone atoms. A mixture of binding types may occur, especially in the case of octamer repeat expansion. Copper binding may stabilize the conformation of this region and may promote oligomerization.</text>
</comment>
<comment type="disease">
    <text evidence="7">PrP is found in high quantity in the brain of humans and animals infected with the degenerative neurological diseases kuru, Creutzfeldt-Jakob disease (CJD), Gerstmann-Straussler syndrome (GSS), scrapie, bovine spongiform encephalopathy (BSE), transmissible mink encephalopathy (TME), etc.</text>
</comment>
<comment type="similarity">
    <text evidence="7">Belongs to the prion family.</text>
</comment>
<proteinExistence type="inferred from homology"/>
<keyword id="KW-0034">Amyloid</keyword>
<keyword id="KW-1003">Cell membrane</keyword>
<keyword id="KW-0186">Copper</keyword>
<keyword id="KW-1015">Disulfide bond</keyword>
<keyword id="KW-0325">Glycoprotein</keyword>
<keyword id="KW-0333">Golgi apparatus</keyword>
<keyword id="KW-0336">GPI-anchor</keyword>
<keyword id="KW-0449">Lipoprotein</keyword>
<keyword id="KW-0472">Membrane</keyword>
<keyword id="KW-0479">Metal-binding</keyword>
<keyword id="KW-0640">Prion</keyword>
<keyword id="KW-0677">Repeat</keyword>
<keyword id="KW-0732">Signal</keyword>
<keyword id="KW-0862">Zinc</keyword>
<evidence type="ECO:0000250" key="1"/>
<evidence type="ECO:0000250" key="2">
    <source>
        <dbReference type="UniProtKB" id="P04156"/>
    </source>
</evidence>
<evidence type="ECO:0000250" key="3">
    <source>
        <dbReference type="UniProtKB" id="P04273"/>
    </source>
</evidence>
<evidence type="ECO:0000250" key="4">
    <source>
        <dbReference type="UniProtKB" id="P04925"/>
    </source>
</evidence>
<evidence type="ECO:0000255" key="5"/>
<evidence type="ECO:0000256" key="6">
    <source>
        <dbReference type="SAM" id="MobiDB-lite"/>
    </source>
</evidence>
<evidence type="ECO:0000305" key="7"/>
<protein>
    <recommendedName>
        <fullName>Major prion protein</fullName>
        <shortName>PrP</shortName>
    </recommendedName>
    <cdAntigenName>CD230</cdAntigenName>
</protein>